<feature type="chain" id="PRO_0000381419" description="Biotin synthase">
    <location>
        <begin position="1"/>
        <end position="327"/>
    </location>
</feature>
<feature type="domain" description="Radical SAM core" evidence="2">
    <location>
        <begin position="51"/>
        <end position="278"/>
    </location>
</feature>
<feature type="binding site" evidence="1">
    <location>
        <position position="66"/>
    </location>
    <ligand>
        <name>[4Fe-4S] cluster</name>
        <dbReference type="ChEBI" id="CHEBI:49883"/>
        <note>4Fe-4S-S-AdoMet</note>
    </ligand>
</feature>
<feature type="binding site" evidence="1">
    <location>
        <position position="70"/>
    </location>
    <ligand>
        <name>[4Fe-4S] cluster</name>
        <dbReference type="ChEBI" id="CHEBI:49883"/>
        <note>4Fe-4S-S-AdoMet</note>
    </ligand>
</feature>
<feature type="binding site" evidence="1">
    <location>
        <position position="73"/>
    </location>
    <ligand>
        <name>[4Fe-4S] cluster</name>
        <dbReference type="ChEBI" id="CHEBI:49883"/>
        <note>4Fe-4S-S-AdoMet</note>
    </ligand>
</feature>
<feature type="binding site" evidence="1">
    <location>
        <position position="110"/>
    </location>
    <ligand>
        <name>[2Fe-2S] cluster</name>
        <dbReference type="ChEBI" id="CHEBI:190135"/>
    </ligand>
</feature>
<feature type="binding site" evidence="1">
    <location>
        <position position="141"/>
    </location>
    <ligand>
        <name>[2Fe-2S] cluster</name>
        <dbReference type="ChEBI" id="CHEBI:190135"/>
    </ligand>
</feature>
<feature type="binding site" evidence="1">
    <location>
        <position position="201"/>
    </location>
    <ligand>
        <name>[2Fe-2S] cluster</name>
        <dbReference type="ChEBI" id="CHEBI:190135"/>
    </ligand>
</feature>
<feature type="binding site" evidence="1">
    <location>
        <position position="273"/>
    </location>
    <ligand>
        <name>[2Fe-2S] cluster</name>
        <dbReference type="ChEBI" id="CHEBI:190135"/>
    </ligand>
</feature>
<dbReference type="EC" id="2.8.1.6" evidence="1"/>
<dbReference type="EMBL" id="CP000947">
    <property type="protein sequence ID" value="ACA31235.1"/>
    <property type="molecule type" value="Genomic_DNA"/>
</dbReference>
<dbReference type="RefSeq" id="WP_012340624.1">
    <property type="nucleotide sequence ID" value="NC_010519.1"/>
</dbReference>
<dbReference type="SMR" id="B0UUK6"/>
<dbReference type="STRING" id="228400.HSM_1485"/>
<dbReference type="GeneID" id="31487783"/>
<dbReference type="KEGG" id="hsm:HSM_1485"/>
<dbReference type="HOGENOM" id="CLU_033172_1_2_6"/>
<dbReference type="UniPathway" id="UPA00078">
    <property type="reaction ID" value="UER00162"/>
</dbReference>
<dbReference type="GO" id="GO:0051537">
    <property type="term" value="F:2 iron, 2 sulfur cluster binding"/>
    <property type="evidence" value="ECO:0007669"/>
    <property type="project" value="UniProtKB-KW"/>
</dbReference>
<dbReference type="GO" id="GO:0051539">
    <property type="term" value="F:4 iron, 4 sulfur cluster binding"/>
    <property type="evidence" value="ECO:0007669"/>
    <property type="project" value="UniProtKB-KW"/>
</dbReference>
<dbReference type="GO" id="GO:0004076">
    <property type="term" value="F:biotin synthase activity"/>
    <property type="evidence" value="ECO:0007669"/>
    <property type="project" value="UniProtKB-UniRule"/>
</dbReference>
<dbReference type="GO" id="GO:0005506">
    <property type="term" value="F:iron ion binding"/>
    <property type="evidence" value="ECO:0007669"/>
    <property type="project" value="UniProtKB-UniRule"/>
</dbReference>
<dbReference type="GO" id="GO:0009102">
    <property type="term" value="P:biotin biosynthetic process"/>
    <property type="evidence" value="ECO:0007669"/>
    <property type="project" value="UniProtKB-UniRule"/>
</dbReference>
<dbReference type="CDD" id="cd01335">
    <property type="entry name" value="Radical_SAM"/>
    <property type="match status" value="1"/>
</dbReference>
<dbReference type="FunFam" id="3.20.20.70:FF:000011">
    <property type="entry name" value="Biotin synthase"/>
    <property type="match status" value="1"/>
</dbReference>
<dbReference type="Gene3D" id="3.20.20.70">
    <property type="entry name" value="Aldolase class I"/>
    <property type="match status" value="1"/>
</dbReference>
<dbReference type="HAMAP" id="MF_01694">
    <property type="entry name" value="BioB"/>
    <property type="match status" value="1"/>
</dbReference>
<dbReference type="InterPro" id="IPR013785">
    <property type="entry name" value="Aldolase_TIM"/>
</dbReference>
<dbReference type="InterPro" id="IPR010722">
    <property type="entry name" value="BATS_dom"/>
</dbReference>
<dbReference type="InterPro" id="IPR002684">
    <property type="entry name" value="Biotin_synth/BioAB"/>
</dbReference>
<dbReference type="InterPro" id="IPR024177">
    <property type="entry name" value="Biotin_synthase"/>
</dbReference>
<dbReference type="InterPro" id="IPR006638">
    <property type="entry name" value="Elp3/MiaA/NifB-like_rSAM"/>
</dbReference>
<dbReference type="InterPro" id="IPR007197">
    <property type="entry name" value="rSAM"/>
</dbReference>
<dbReference type="NCBIfam" id="TIGR00433">
    <property type="entry name" value="bioB"/>
    <property type="match status" value="1"/>
</dbReference>
<dbReference type="PANTHER" id="PTHR22976">
    <property type="entry name" value="BIOTIN SYNTHASE"/>
    <property type="match status" value="1"/>
</dbReference>
<dbReference type="PANTHER" id="PTHR22976:SF2">
    <property type="entry name" value="BIOTIN SYNTHASE, MITOCHONDRIAL"/>
    <property type="match status" value="1"/>
</dbReference>
<dbReference type="Pfam" id="PF06968">
    <property type="entry name" value="BATS"/>
    <property type="match status" value="1"/>
</dbReference>
<dbReference type="Pfam" id="PF04055">
    <property type="entry name" value="Radical_SAM"/>
    <property type="match status" value="1"/>
</dbReference>
<dbReference type="PIRSF" id="PIRSF001619">
    <property type="entry name" value="Biotin_synth"/>
    <property type="match status" value="1"/>
</dbReference>
<dbReference type="SFLD" id="SFLDG01060">
    <property type="entry name" value="BATS_domain_containing"/>
    <property type="match status" value="1"/>
</dbReference>
<dbReference type="SFLD" id="SFLDF00272">
    <property type="entry name" value="biotin_synthase"/>
    <property type="match status" value="1"/>
</dbReference>
<dbReference type="SMART" id="SM00876">
    <property type="entry name" value="BATS"/>
    <property type="match status" value="1"/>
</dbReference>
<dbReference type="SMART" id="SM00729">
    <property type="entry name" value="Elp3"/>
    <property type="match status" value="1"/>
</dbReference>
<dbReference type="SUPFAM" id="SSF102114">
    <property type="entry name" value="Radical SAM enzymes"/>
    <property type="match status" value="1"/>
</dbReference>
<dbReference type="PROSITE" id="PS51918">
    <property type="entry name" value="RADICAL_SAM"/>
    <property type="match status" value="1"/>
</dbReference>
<comment type="function">
    <text evidence="1">Catalyzes the conversion of dethiobiotin (DTB) to biotin by the insertion of a sulfur atom into dethiobiotin via a radical-based mechanism.</text>
</comment>
<comment type="catalytic activity">
    <reaction evidence="1">
        <text>(4R,5S)-dethiobiotin + (sulfur carrier)-SH + 2 reduced [2Fe-2S]-[ferredoxin] + 2 S-adenosyl-L-methionine = (sulfur carrier)-H + biotin + 2 5'-deoxyadenosine + 2 L-methionine + 2 oxidized [2Fe-2S]-[ferredoxin]</text>
        <dbReference type="Rhea" id="RHEA:22060"/>
        <dbReference type="Rhea" id="RHEA-COMP:10000"/>
        <dbReference type="Rhea" id="RHEA-COMP:10001"/>
        <dbReference type="Rhea" id="RHEA-COMP:14737"/>
        <dbReference type="Rhea" id="RHEA-COMP:14739"/>
        <dbReference type="ChEBI" id="CHEBI:17319"/>
        <dbReference type="ChEBI" id="CHEBI:29917"/>
        <dbReference type="ChEBI" id="CHEBI:33737"/>
        <dbReference type="ChEBI" id="CHEBI:33738"/>
        <dbReference type="ChEBI" id="CHEBI:57586"/>
        <dbReference type="ChEBI" id="CHEBI:57844"/>
        <dbReference type="ChEBI" id="CHEBI:59789"/>
        <dbReference type="ChEBI" id="CHEBI:64428"/>
        <dbReference type="ChEBI" id="CHEBI:149473"/>
        <dbReference type="EC" id="2.8.1.6"/>
    </reaction>
</comment>
<comment type="cofactor">
    <cofactor evidence="1">
        <name>[4Fe-4S] cluster</name>
        <dbReference type="ChEBI" id="CHEBI:49883"/>
    </cofactor>
    <text evidence="1">Binds 1 [4Fe-4S] cluster. The cluster is coordinated with 3 cysteines and an exchangeable S-adenosyl-L-methionine.</text>
</comment>
<comment type="cofactor">
    <cofactor evidence="1">
        <name>[2Fe-2S] cluster</name>
        <dbReference type="ChEBI" id="CHEBI:190135"/>
    </cofactor>
    <text evidence="1">Binds 1 [2Fe-2S] cluster. The cluster is coordinated with 3 cysteines and 1 arginine.</text>
</comment>
<comment type="pathway">
    <text evidence="1">Cofactor biosynthesis; biotin biosynthesis; biotin from 7,8-diaminononanoate: step 2/2.</text>
</comment>
<comment type="subunit">
    <text evidence="1">Homodimer.</text>
</comment>
<comment type="similarity">
    <text evidence="1">Belongs to the radical SAM superfamily. Biotin synthase family.</text>
</comment>
<name>BIOB_HISS2</name>
<organism>
    <name type="scientific">Histophilus somni (strain 2336)</name>
    <name type="common">Haemophilus somnus</name>
    <dbReference type="NCBI Taxonomy" id="228400"/>
    <lineage>
        <taxon>Bacteria</taxon>
        <taxon>Pseudomonadati</taxon>
        <taxon>Pseudomonadota</taxon>
        <taxon>Gammaproteobacteria</taxon>
        <taxon>Pasteurellales</taxon>
        <taxon>Pasteurellaceae</taxon>
        <taxon>Histophilus</taxon>
    </lineage>
</organism>
<keyword id="KW-0001">2Fe-2S</keyword>
<keyword id="KW-0004">4Fe-4S</keyword>
<keyword id="KW-0093">Biotin biosynthesis</keyword>
<keyword id="KW-0408">Iron</keyword>
<keyword id="KW-0411">Iron-sulfur</keyword>
<keyword id="KW-0479">Metal-binding</keyword>
<keyword id="KW-0949">S-adenosyl-L-methionine</keyword>
<keyword id="KW-0808">Transferase</keyword>
<proteinExistence type="inferred from homology"/>
<gene>
    <name evidence="1" type="primary">bioB</name>
    <name type="ordered locus">HSM_1485</name>
</gene>
<sequence>MTITTINIPSLTPHPCVEYWSVCKVEALFETPFLELVYQAAQVHRKHFNPQTIQLSTLMSIKTGGCPEDCSYCPQSARYHTGVQNQQLLCVEEIVEKAKIAKSRGAGRFCMGAAWRGPKPKDIGKITEIIKAVKDLGLETCGTFGLLQDGMAEELKEAGLDYYNHNIDTAPEHYKEIIGTRDFDDRLNTLGKIRKAGLKVCCGGIVGMNETRKERAGLIASLANLDPQPESVPINQLVKVEGTPLADAQELDWTEFVRTIAVARITMPKSYVRLSAGRQGMSEEMQAMCFMAGANSIFYGDKLLVTVNPEEDGDQLLMAKLDLKPET</sequence>
<protein>
    <recommendedName>
        <fullName evidence="1">Biotin synthase</fullName>
        <ecNumber evidence="1">2.8.1.6</ecNumber>
    </recommendedName>
</protein>
<evidence type="ECO:0000255" key="1">
    <source>
        <dbReference type="HAMAP-Rule" id="MF_01694"/>
    </source>
</evidence>
<evidence type="ECO:0000255" key="2">
    <source>
        <dbReference type="PROSITE-ProRule" id="PRU01266"/>
    </source>
</evidence>
<reference key="1">
    <citation type="submission" date="2008-02" db="EMBL/GenBank/DDBJ databases">
        <title>Complete sequence of Haemophilus somnus 2336.</title>
        <authorList>
            <consortium name="US DOE Joint Genome Institute"/>
            <person name="Siddaramappa S."/>
            <person name="Duncan A.J."/>
            <person name="Challacombe J.F."/>
            <person name="Rainey D."/>
            <person name="Gillaspy A.F."/>
            <person name="Carson M."/>
            <person name="Gipson J."/>
            <person name="Gipson M."/>
            <person name="Bruce D."/>
            <person name="Detter J.C."/>
            <person name="Han C.S."/>
            <person name="Land M."/>
            <person name="Tapia R."/>
            <person name="Thompson L.S."/>
            <person name="Orvis J."/>
            <person name="Zaitshik J."/>
            <person name="Barnes G."/>
            <person name="Brettin T.S."/>
            <person name="Dyer D.W."/>
            <person name="Inzana T.J."/>
        </authorList>
    </citation>
    <scope>NUCLEOTIDE SEQUENCE [LARGE SCALE GENOMIC DNA]</scope>
    <source>
        <strain>2336</strain>
    </source>
</reference>
<accession>B0UUK6</accession>